<accession>A8R3S7</accession>
<comment type="function">
    <text evidence="4 5">Positive regulator of the expression of the gene qedA and the activity of ADH I but does not affect the activities of ADH IIB or ADH IIG.</text>
</comment>
<comment type="induction">
    <text evidence="4 5">Up-regulated by AgmR but the exaE promoter is down-regulated in the presence of a combination of glucose and ethanol.</text>
</comment>
<feature type="chain" id="PRO_0000419531" description="Transcriptional activator protein ExaE">
    <location>
        <begin position="1"/>
        <end position="214"/>
    </location>
</feature>
<feature type="domain" description="Response regulatory" evidence="2">
    <location>
        <begin position="2"/>
        <end position="118"/>
    </location>
</feature>
<feature type="domain" description="HTH luxR-type" evidence="3">
    <location>
        <begin position="143"/>
        <end position="208"/>
    </location>
</feature>
<feature type="DNA-binding region" description="H-T-H motif" evidence="3">
    <location>
        <begin position="167"/>
        <end position="186"/>
    </location>
</feature>
<feature type="modified residue" description="4-aspartylphosphate" evidence="1 2">
    <location>
        <position position="53"/>
    </location>
</feature>
<gene>
    <name evidence="7" type="primary">exaE</name>
</gene>
<protein>
    <recommendedName>
        <fullName>Transcriptional activator protein ExaE</fullName>
    </recommendedName>
</protein>
<reference evidence="6 7" key="1">
    <citation type="journal article" date="2008" name="FEMS Microbiol. Lett.">
        <title>Disruption of quinoprotein ethanol dehydrogenase gene and adjacent genes in Pseudomonas putida HK5.</title>
        <authorList>
            <person name="Promden W."/>
            <person name="Vangnai A.S."/>
            <person name="Pongsawasdi P."/>
            <person name="Adachi O."/>
            <person name="Matsushita K."/>
            <person name="Toyama H."/>
        </authorList>
    </citation>
    <scope>NUCLEOTIDE SEQUENCE [GENOMIC DNA]</scope>
    <scope>FUNCTION</scope>
    <scope>INDUCTION</scope>
    <source>
        <strain evidence="7">HK5</strain>
    </source>
</reference>
<reference evidence="6" key="2">
    <citation type="journal article" date="2009" name="Microbiology">
        <title>Analysis of the promoter activities of the genes encoding three quinoprotein alcohol dehydrogenases in Pseudomonas putida HK5.</title>
        <authorList>
            <person name="Promden W."/>
            <person name="Vangnai A.S."/>
            <person name="Toyama H."/>
            <person name="Matsushita K."/>
            <person name="Pongsawasdi P."/>
        </authorList>
    </citation>
    <scope>FUNCTION</scope>
    <scope>INDUCTION</scope>
    <source>
        <strain evidence="5">HK5</strain>
    </source>
</reference>
<dbReference type="EMBL" id="AB333783">
    <property type="protein sequence ID" value="BAF91143.1"/>
    <property type="molecule type" value="Genomic_DNA"/>
</dbReference>
<dbReference type="SMR" id="A8R3S7"/>
<dbReference type="GO" id="GO:0003677">
    <property type="term" value="F:DNA binding"/>
    <property type="evidence" value="ECO:0007669"/>
    <property type="project" value="UniProtKB-KW"/>
</dbReference>
<dbReference type="GO" id="GO:0000160">
    <property type="term" value="P:phosphorelay signal transduction system"/>
    <property type="evidence" value="ECO:0007669"/>
    <property type="project" value="InterPro"/>
</dbReference>
<dbReference type="GO" id="GO:0006355">
    <property type="term" value="P:regulation of DNA-templated transcription"/>
    <property type="evidence" value="ECO:0007669"/>
    <property type="project" value="InterPro"/>
</dbReference>
<dbReference type="CDD" id="cd06170">
    <property type="entry name" value="LuxR_C_like"/>
    <property type="match status" value="1"/>
</dbReference>
<dbReference type="CDD" id="cd17535">
    <property type="entry name" value="REC_NarL-like"/>
    <property type="match status" value="1"/>
</dbReference>
<dbReference type="Gene3D" id="3.40.50.2300">
    <property type="match status" value="1"/>
</dbReference>
<dbReference type="InterPro" id="IPR011006">
    <property type="entry name" value="CheY-like_superfamily"/>
</dbReference>
<dbReference type="InterPro" id="IPR016032">
    <property type="entry name" value="Sig_transdc_resp-reg_C-effctor"/>
</dbReference>
<dbReference type="InterPro" id="IPR001789">
    <property type="entry name" value="Sig_transdc_resp-reg_receiver"/>
</dbReference>
<dbReference type="InterPro" id="IPR000792">
    <property type="entry name" value="Tscrpt_reg_LuxR_C"/>
</dbReference>
<dbReference type="InterPro" id="IPR039420">
    <property type="entry name" value="WalR-like"/>
</dbReference>
<dbReference type="PANTHER" id="PTHR43214">
    <property type="entry name" value="TWO-COMPONENT RESPONSE REGULATOR"/>
    <property type="match status" value="1"/>
</dbReference>
<dbReference type="PANTHER" id="PTHR43214:SF43">
    <property type="entry name" value="TWO-COMPONENT RESPONSE REGULATOR"/>
    <property type="match status" value="1"/>
</dbReference>
<dbReference type="Pfam" id="PF00196">
    <property type="entry name" value="GerE"/>
    <property type="match status" value="1"/>
</dbReference>
<dbReference type="Pfam" id="PF00072">
    <property type="entry name" value="Response_reg"/>
    <property type="match status" value="1"/>
</dbReference>
<dbReference type="PRINTS" id="PR00038">
    <property type="entry name" value="HTHLUXR"/>
</dbReference>
<dbReference type="SMART" id="SM00421">
    <property type="entry name" value="HTH_LUXR"/>
    <property type="match status" value="1"/>
</dbReference>
<dbReference type="SMART" id="SM00448">
    <property type="entry name" value="REC"/>
    <property type="match status" value="1"/>
</dbReference>
<dbReference type="SUPFAM" id="SSF46894">
    <property type="entry name" value="C-terminal effector domain of the bipartite response regulators"/>
    <property type="match status" value="1"/>
</dbReference>
<dbReference type="SUPFAM" id="SSF52172">
    <property type="entry name" value="CheY-like"/>
    <property type="match status" value="1"/>
</dbReference>
<dbReference type="PROSITE" id="PS50043">
    <property type="entry name" value="HTH_LUXR_2"/>
    <property type="match status" value="1"/>
</dbReference>
<dbReference type="PROSITE" id="PS50110">
    <property type="entry name" value="RESPONSE_REGULATORY"/>
    <property type="match status" value="1"/>
</dbReference>
<keyword id="KW-0238">DNA-binding</keyword>
<keyword id="KW-0597">Phosphoprotein</keyword>
<keyword id="KW-0804">Transcription</keyword>
<keyword id="KW-0805">Transcription regulation</keyword>
<evidence type="ECO:0000250" key="1">
    <source>
        <dbReference type="UniProtKB" id="P36556"/>
    </source>
</evidence>
<evidence type="ECO:0000255" key="2">
    <source>
        <dbReference type="PROSITE-ProRule" id="PRU00169"/>
    </source>
</evidence>
<evidence type="ECO:0000255" key="3">
    <source>
        <dbReference type="PROSITE-ProRule" id="PRU00411"/>
    </source>
</evidence>
<evidence type="ECO:0000269" key="4">
    <source>
    </source>
</evidence>
<evidence type="ECO:0000269" key="5">
    <source>
    </source>
</evidence>
<evidence type="ECO:0000305" key="6"/>
<evidence type="ECO:0000312" key="7">
    <source>
        <dbReference type="EMBL" id="BAF91143.1"/>
    </source>
</evidence>
<organism>
    <name type="scientific">Pseudomonas putida</name>
    <name type="common">Arthrobacter siderocapsulatus</name>
    <dbReference type="NCBI Taxonomy" id="303"/>
    <lineage>
        <taxon>Bacteria</taxon>
        <taxon>Pseudomonadati</taxon>
        <taxon>Pseudomonadota</taxon>
        <taxon>Gammaproteobacteria</taxon>
        <taxon>Pseudomonadales</taxon>
        <taxon>Pseudomonadaceae</taxon>
        <taxon>Pseudomonas</taxon>
    </lineage>
</organism>
<proteinExistence type="evidence at transcript level"/>
<sequence length="214" mass="23014">MGILLVDDHPMIRLGLAHFLGEGLNGLPVREAGSGEEALQQVQEELPGLVIMDFDLPGISGLETTRRLRQRLPQLRVLFFSEHTELGLVRQALDAGACGFLSKAAAPAVVLEAVRRVLAGHAYIEQPLATQLACQPHPGQGGGNARLQGLTQREIEVFLMLAKGTPTRLIAQQLCISAKTVSNYLTLLKSKLQVSSHAELVHLAIEAGLLRIAA</sequence>
<name>EXAE_PSEPU</name>